<dbReference type="EC" id="5.6.1.6" evidence="1"/>
<dbReference type="EMBL" id="U20418">
    <property type="protein sequence ID" value="AAA68600.1"/>
    <property type="molecule type" value="mRNA"/>
</dbReference>
<dbReference type="EMBL" id="DP000179">
    <property type="protein sequence ID" value="ABI75298.1"/>
    <property type="molecule type" value="Genomic_DNA"/>
</dbReference>
<dbReference type="EMBL" id="M96682">
    <property type="protein sequence ID" value="AAA31514.1"/>
    <property type="molecule type" value="Genomic_DNA"/>
</dbReference>
<dbReference type="PIR" id="B39323">
    <property type="entry name" value="B39323"/>
</dbReference>
<dbReference type="RefSeq" id="NP_001009781.1">
    <property type="nucleotide sequence ID" value="NM_001009781.1"/>
</dbReference>
<dbReference type="PDB" id="1CKW">
    <property type="method" value="NMR"/>
    <property type="chains" value="A=497-522"/>
</dbReference>
<dbReference type="PDB" id="1CKX">
    <property type="method" value="NMR"/>
    <property type="chains" value="A=497-522"/>
</dbReference>
<dbReference type="PDB" id="1CKY">
    <property type="method" value="NMR"/>
    <property type="chains" value="A=497-522"/>
</dbReference>
<dbReference type="PDB" id="1CKZ">
    <property type="method" value="NMR"/>
    <property type="chains" value="A=497-522"/>
</dbReference>
<dbReference type="PDBsum" id="1CKW"/>
<dbReference type="PDBsum" id="1CKX"/>
<dbReference type="PDBsum" id="1CKY"/>
<dbReference type="PDBsum" id="1CKZ"/>
<dbReference type="SMR" id="Q00555"/>
<dbReference type="STRING" id="9940.ENSOARP00000019474"/>
<dbReference type="GlyCosmos" id="Q00555">
    <property type="glycosylation" value="2 sites, No reported glycans"/>
</dbReference>
<dbReference type="PaxDb" id="9940-ENSOARP00000019474"/>
<dbReference type="DNASU" id="443347"/>
<dbReference type="Ensembl" id="ENSOART00020025666">
    <property type="protein sequence ID" value="ENSOARP00020021276"/>
    <property type="gene ID" value="ENSOARG00020016363"/>
</dbReference>
<dbReference type="Ensembl" id="ENSOART00185001039">
    <property type="protein sequence ID" value="ENSOARP00185000402"/>
    <property type="gene ID" value="ENSOARG00185000680"/>
</dbReference>
<dbReference type="Ensembl" id="ENSOART00220065752">
    <property type="protein sequence ID" value="ENSOARP00220035106"/>
    <property type="gene ID" value="ENSOARG00220039495"/>
</dbReference>
<dbReference type="Ensembl" id="ENSOART00225027368">
    <property type="protein sequence ID" value="ENSOARP00225013217"/>
    <property type="gene ID" value="ENSOARG00225016724"/>
</dbReference>
<dbReference type="GeneID" id="443347"/>
<dbReference type="KEGG" id="oas:443347"/>
<dbReference type="CTD" id="1080"/>
<dbReference type="eggNOG" id="KOG0054">
    <property type="taxonomic scope" value="Eukaryota"/>
</dbReference>
<dbReference type="HOGENOM" id="CLU_000604_27_1_1"/>
<dbReference type="OrthoDB" id="6500128at2759"/>
<dbReference type="BRENDA" id="5.6.1.6">
    <property type="organism ID" value="2668"/>
</dbReference>
<dbReference type="EvolutionaryTrace" id="Q00555"/>
<dbReference type="Proteomes" id="UP000002356">
    <property type="component" value="Chromosome 4"/>
</dbReference>
<dbReference type="Bgee" id="ENSOARG00000018133">
    <property type="expression patterns" value="Expressed in caecum and 40 other cell types or tissues"/>
</dbReference>
<dbReference type="ExpressionAtlas" id="Q00555">
    <property type="expression patterns" value="baseline and differential"/>
</dbReference>
<dbReference type="GO" id="GO:0016324">
    <property type="term" value="C:apical plasma membrane"/>
    <property type="evidence" value="ECO:0000250"/>
    <property type="project" value="UniProtKB"/>
</dbReference>
<dbReference type="GO" id="GO:0009986">
    <property type="term" value="C:cell surface"/>
    <property type="evidence" value="ECO:0007669"/>
    <property type="project" value="Ensembl"/>
</dbReference>
<dbReference type="GO" id="GO:0034707">
    <property type="term" value="C:chloride channel complex"/>
    <property type="evidence" value="ECO:0007669"/>
    <property type="project" value="UniProtKB-KW"/>
</dbReference>
<dbReference type="GO" id="GO:0005829">
    <property type="term" value="C:cytosol"/>
    <property type="evidence" value="ECO:0007669"/>
    <property type="project" value="Ensembl"/>
</dbReference>
<dbReference type="GO" id="GO:0005769">
    <property type="term" value="C:early endosome"/>
    <property type="evidence" value="ECO:0000250"/>
    <property type="project" value="UniProtKB"/>
</dbReference>
<dbReference type="GO" id="GO:0031901">
    <property type="term" value="C:early endosome membrane"/>
    <property type="evidence" value="ECO:0007669"/>
    <property type="project" value="UniProtKB-SubCell"/>
</dbReference>
<dbReference type="GO" id="GO:0005789">
    <property type="term" value="C:endoplasmic reticulum membrane"/>
    <property type="evidence" value="ECO:0000250"/>
    <property type="project" value="UniProtKB"/>
</dbReference>
<dbReference type="GO" id="GO:0016020">
    <property type="term" value="C:membrane"/>
    <property type="evidence" value="ECO:0000250"/>
    <property type="project" value="UniProtKB"/>
</dbReference>
<dbReference type="GO" id="GO:0005634">
    <property type="term" value="C:nucleus"/>
    <property type="evidence" value="ECO:0000250"/>
    <property type="project" value="UniProtKB"/>
</dbReference>
<dbReference type="GO" id="GO:0005886">
    <property type="term" value="C:plasma membrane"/>
    <property type="evidence" value="ECO:0000250"/>
    <property type="project" value="UniProtKB"/>
</dbReference>
<dbReference type="GO" id="GO:0055038">
    <property type="term" value="C:recycling endosome membrane"/>
    <property type="evidence" value="ECO:0007669"/>
    <property type="project" value="UniProtKB-SubCell"/>
</dbReference>
<dbReference type="GO" id="GO:0071889">
    <property type="term" value="F:14-3-3 protein binding"/>
    <property type="evidence" value="ECO:0007669"/>
    <property type="project" value="Ensembl"/>
</dbReference>
<dbReference type="GO" id="GO:0140359">
    <property type="term" value="F:ABC-type transporter activity"/>
    <property type="evidence" value="ECO:0007669"/>
    <property type="project" value="InterPro"/>
</dbReference>
<dbReference type="GO" id="GO:0005524">
    <property type="term" value="F:ATP binding"/>
    <property type="evidence" value="ECO:0007669"/>
    <property type="project" value="UniProtKB-KW"/>
</dbReference>
<dbReference type="GO" id="GO:0016887">
    <property type="term" value="F:ATP hydrolysis activity"/>
    <property type="evidence" value="ECO:0000250"/>
    <property type="project" value="UniProtKB"/>
</dbReference>
<dbReference type="GO" id="GO:0015106">
    <property type="term" value="F:bicarbonate transmembrane transporter activity"/>
    <property type="evidence" value="ECO:0000250"/>
    <property type="project" value="UniProtKB"/>
</dbReference>
<dbReference type="GO" id="GO:0005254">
    <property type="term" value="F:chloride channel activity"/>
    <property type="evidence" value="ECO:0000250"/>
    <property type="project" value="UniProtKB"/>
</dbReference>
<dbReference type="GO" id="GO:0019869">
    <property type="term" value="F:chloride channel inhibitor activity"/>
    <property type="evidence" value="ECO:0000250"/>
    <property type="project" value="UniProtKB"/>
</dbReference>
<dbReference type="GO" id="GO:0015108">
    <property type="term" value="F:chloride transmembrane transporter activity"/>
    <property type="evidence" value="ECO:0000250"/>
    <property type="project" value="UniProtKB"/>
</dbReference>
<dbReference type="GO" id="GO:0019899">
    <property type="term" value="F:enzyme binding"/>
    <property type="evidence" value="ECO:0007669"/>
    <property type="project" value="Ensembl"/>
</dbReference>
<dbReference type="GO" id="GO:0005260">
    <property type="term" value="F:intracellularly ATP-gated chloride channel activity"/>
    <property type="evidence" value="ECO:0000250"/>
    <property type="project" value="UniProtKB"/>
</dbReference>
<dbReference type="GO" id="GO:0030165">
    <property type="term" value="F:PDZ domain binding"/>
    <property type="evidence" value="ECO:0007669"/>
    <property type="project" value="Ensembl"/>
</dbReference>
<dbReference type="GO" id="GO:0051087">
    <property type="term" value="F:protein-folding chaperone binding"/>
    <property type="evidence" value="ECO:0007669"/>
    <property type="project" value="Ensembl"/>
</dbReference>
<dbReference type="GO" id="GO:0106138">
    <property type="term" value="F:Sec61 translocon complex binding"/>
    <property type="evidence" value="ECO:0007669"/>
    <property type="project" value="Ensembl"/>
</dbReference>
<dbReference type="GO" id="GO:0097186">
    <property type="term" value="P:amelogenesis"/>
    <property type="evidence" value="ECO:0007669"/>
    <property type="project" value="Ensembl"/>
</dbReference>
<dbReference type="GO" id="GO:0015701">
    <property type="term" value="P:bicarbonate transport"/>
    <property type="evidence" value="ECO:0000250"/>
    <property type="project" value="UniProtKB"/>
</dbReference>
<dbReference type="GO" id="GO:0071320">
    <property type="term" value="P:cellular response to cAMP"/>
    <property type="evidence" value="ECO:0000250"/>
    <property type="project" value="UniProtKB"/>
</dbReference>
<dbReference type="GO" id="GO:1904322">
    <property type="term" value="P:cellular response to forskolin"/>
    <property type="evidence" value="ECO:0000250"/>
    <property type="project" value="UniProtKB"/>
</dbReference>
<dbReference type="GO" id="GO:1902476">
    <property type="term" value="P:chloride transmembrane transport"/>
    <property type="evidence" value="ECO:0000250"/>
    <property type="project" value="UniProtKB"/>
</dbReference>
<dbReference type="GO" id="GO:0006695">
    <property type="term" value="P:cholesterol biosynthetic process"/>
    <property type="evidence" value="ECO:0007669"/>
    <property type="project" value="Ensembl"/>
</dbReference>
<dbReference type="GO" id="GO:0030301">
    <property type="term" value="P:cholesterol transport"/>
    <property type="evidence" value="ECO:0007669"/>
    <property type="project" value="Ensembl"/>
</dbReference>
<dbReference type="GO" id="GO:0051649">
    <property type="term" value="P:establishment of localization in cell"/>
    <property type="evidence" value="ECO:0007669"/>
    <property type="project" value="Ensembl"/>
</dbReference>
<dbReference type="GO" id="GO:0051454">
    <property type="term" value="P:intracellular pH elevation"/>
    <property type="evidence" value="ECO:0000250"/>
    <property type="project" value="UniProtKB"/>
</dbReference>
<dbReference type="GO" id="GO:0060081">
    <property type="term" value="P:membrane hyperpolarization"/>
    <property type="evidence" value="ECO:0000250"/>
    <property type="project" value="UniProtKB"/>
</dbReference>
<dbReference type="GO" id="GO:0050891">
    <property type="term" value="P:multicellular organismal-level water homeostasis"/>
    <property type="evidence" value="ECO:0000250"/>
    <property type="project" value="UniProtKB"/>
</dbReference>
<dbReference type="GO" id="GO:0070175">
    <property type="term" value="P:positive regulation of enamel mineralization"/>
    <property type="evidence" value="ECO:0007669"/>
    <property type="project" value="Ensembl"/>
</dbReference>
<dbReference type="GO" id="GO:0045921">
    <property type="term" value="P:positive regulation of exocytosis"/>
    <property type="evidence" value="ECO:0007669"/>
    <property type="project" value="Ensembl"/>
</dbReference>
<dbReference type="GO" id="GO:0035774">
    <property type="term" value="P:positive regulation of insulin secretion involved in cellular response to glucose stimulus"/>
    <property type="evidence" value="ECO:0007669"/>
    <property type="project" value="Ensembl"/>
</dbReference>
<dbReference type="GO" id="GO:0034976">
    <property type="term" value="P:response to endoplasmic reticulum stress"/>
    <property type="evidence" value="ECO:0000250"/>
    <property type="project" value="UniProtKB"/>
</dbReference>
<dbReference type="GO" id="GO:0048240">
    <property type="term" value="P:sperm capacitation"/>
    <property type="evidence" value="ECO:0000250"/>
    <property type="project" value="UniProtKB"/>
</dbReference>
<dbReference type="GO" id="GO:0035377">
    <property type="term" value="P:transepithelial water transport"/>
    <property type="evidence" value="ECO:0000250"/>
    <property type="project" value="UniProtKB"/>
</dbReference>
<dbReference type="GO" id="GO:0006904">
    <property type="term" value="P:vesicle docking involved in exocytosis"/>
    <property type="evidence" value="ECO:0007669"/>
    <property type="project" value="Ensembl"/>
</dbReference>
<dbReference type="CDD" id="cd18594">
    <property type="entry name" value="ABC_6TM_CFTR_D1"/>
    <property type="match status" value="1"/>
</dbReference>
<dbReference type="CDD" id="cd18600">
    <property type="entry name" value="ABC_6TM_CFTR_D2"/>
    <property type="match status" value="1"/>
</dbReference>
<dbReference type="CDD" id="cd03291">
    <property type="entry name" value="ABCC_CFTR1"/>
    <property type="match status" value="1"/>
</dbReference>
<dbReference type="FunFam" id="1.20.1560.10:FF:000017">
    <property type="entry name" value="Cystic fibrosis transmembrane conductance regulator"/>
    <property type="match status" value="1"/>
</dbReference>
<dbReference type="FunFam" id="1.20.1560.10:FF:000019">
    <property type="entry name" value="Cystic fibrosis transmembrane conductance regulator"/>
    <property type="match status" value="1"/>
</dbReference>
<dbReference type="FunFam" id="3.40.50.300:FF:000581">
    <property type="entry name" value="Cystic fibrosis transmembrane conductance regulator"/>
    <property type="match status" value="1"/>
</dbReference>
<dbReference type="FunFam" id="3.40.50.300:FF:000591">
    <property type="entry name" value="Cystic fibrosis transmembrane conductance regulator"/>
    <property type="match status" value="1"/>
</dbReference>
<dbReference type="Gene3D" id="1.20.1560.10">
    <property type="entry name" value="ABC transporter type 1, transmembrane domain"/>
    <property type="match status" value="2"/>
</dbReference>
<dbReference type="Gene3D" id="3.40.50.300">
    <property type="entry name" value="P-loop containing nucleotide triphosphate hydrolases"/>
    <property type="match status" value="2"/>
</dbReference>
<dbReference type="InterPro" id="IPR003593">
    <property type="entry name" value="AAA+_ATPase"/>
</dbReference>
<dbReference type="InterPro" id="IPR011527">
    <property type="entry name" value="ABC1_TM_dom"/>
</dbReference>
<dbReference type="InterPro" id="IPR036640">
    <property type="entry name" value="ABC1_TM_sf"/>
</dbReference>
<dbReference type="InterPro" id="IPR003439">
    <property type="entry name" value="ABC_transporter-like_ATP-bd"/>
</dbReference>
<dbReference type="InterPro" id="IPR017871">
    <property type="entry name" value="ABC_transporter-like_CS"/>
</dbReference>
<dbReference type="InterPro" id="IPR050173">
    <property type="entry name" value="ABC_transporter_C-like"/>
</dbReference>
<dbReference type="InterPro" id="IPR009147">
    <property type="entry name" value="CFTR/ABCC7"/>
</dbReference>
<dbReference type="InterPro" id="IPR047082">
    <property type="entry name" value="CFTR1_ATP-bd_dom1"/>
</dbReference>
<dbReference type="InterPro" id="IPR025837">
    <property type="entry name" value="CFTR_reg_dom"/>
</dbReference>
<dbReference type="InterPro" id="IPR027417">
    <property type="entry name" value="P-loop_NTPase"/>
</dbReference>
<dbReference type="NCBIfam" id="TIGR01271">
    <property type="entry name" value="CFTR_protein"/>
    <property type="match status" value="1"/>
</dbReference>
<dbReference type="PANTHER" id="PTHR24223">
    <property type="entry name" value="ATP-BINDING CASSETTE SUB-FAMILY C"/>
    <property type="match status" value="1"/>
</dbReference>
<dbReference type="PANTHER" id="PTHR24223:SF19">
    <property type="entry name" value="CYSTIC FIBROSIS TRANSMEMBRANE CONDUCTANCE REGULATOR"/>
    <property type="match status" value="1"/>
</dbReference>
<dbReference type="Pfam" id="PF00664">
    <property type="entry name" value="ABC_membrane"/>
    <property type="match status" value="2"/>
</dbReference>
<dbReference type="Pfam" id="PF00005">
    <property type="entry name" value="ABC_tran"/>
    <property type="match status" value="2"/>
</dbReference>
<dbReference type="Pfam" id="PF14396">
    <property type="entry name" value="CFTR_R"/>
    <property type="match status" value="1"/>
</dbReference>
<dbReference type="PRINTS" id="PR01851">
    <property type="entry name" value="CYSFIBREGLTR"/>
</dbReference>
<dbReference type="SMART" id="SM00382">
    <property type="entry name" value="AAA"/>
    <property type="match status" value="2"/>
</dbReference>
<dbReference type="SUPFAM" id="SSF90123">
    <property type="entry name" value="ABC transporter transmembrane region"/>
    <property type="match status" value="2"/>
</dbReference>
<dbReference type="SUPFAM" id="SSF52540">
    <property type="entry name" value="P-loop containing nucleoside triphosphate hydrolases"/>
    <property type="match status" value="2"/>
</dbReference>
<dbReference type="PROSITE" id="PS50929">
    <property type="entry name" value="ABC_TM1F"/>
    <property type="match status" value="2"/>
</dbReference>
<dbReference type="PROSITE" id="PS00211">
    <property type="entry name" value="ABC_TRANSPORTER_1"/>
    <property type="match status" value="1"/>
</dbReference>
<dbReference type="PROSITE" id="PS50893">
    <property type="entry name" value="ABC_TRANSPORTER_2"/>
    <property type="match status" value="2"/>
</dbReference>
<keyword id="KW-0002">3D-structure</keyword>
<keyword id="KW-0067">ATP-binding</keyword>
<keyword id="KW-1003">Cell membrane</keyword>
<keyword id="KW-0868">Chloride</keyword>
<keyword id="KW-0869">Chloride channel</keyword>
<keyword id="KW-0256">Endoplasmic reticulum</keyword>
<keyword id="KW-0967">Endosome</keyword>
<keyword id="KW-0325">Glycoprotein</keyword>
<keyword id="KW-0407">Ion channel</keyword>
<keyword id="KW-0406">Ion transport</keyword>
<keyword id="KW-0413">Isomerase</keyword>
<keyword id="KW-1017">Isopeptide bond</keyword>
<keyword id="KW-0449">Lipoprotein</keyword>
<keyword id="KW-0472">Membrane</keyword>
<keyword id="KW-0547">Nucleotide-binding</keyword>
<keyword id="KW-0539">Nucleus</keyword>
<keyword id="KW-0564">Palmitate</keyword>
<keyword id="KW-0597">Phosphoprotein</keyword>
<keyword id="KW-1185">Reference proteome</keyword>
<keyword id="KW-0677">Repeat</keyword>
<keyword id="KW-0812">Transmembrane</keyword>
<keyword id="KW-1133">Transmembrane helix</keyword>
<keyword id="KW-0813">Transport</keyword>
<keyword id="KW-0832">Ubl conjugation</keyword>
<sequence>MQRSPLEKASVVSKLFFSWTRPILKKGYRQRLELSDIYHISSSDSADNLSEKLEREWDRELASKKNPKLINALRRCFFWRFMFYGIILYLGEVTKAVQPLLLGRIIASYDPDNKVERSIAIYLGIGLCLLFIVRTLLLHPAIFGLHHIGMQMRIAMFSLIYKKTLKLSSRVLDKISIGQLVSLLSNNLNKFDEGLALAHFVWIAPLQVTLLMGLLWDLLQAFTFCGLAFLVVLALLQAGLGKMMMKYRDQRAGKINERLVITSEMIENIQSVKAYCWEEAMEKIIENLRQTELKLTRKAAYVRYLNSSAFFFSGFFVVFLSVLPYALLKGIILRKIFTTISFCIVLRMAVTRQFPWAVQTWYDSLGAINKIQDFLQKQEYKTLEYNLTTTDVVMENVTAFWEEGFSKLFEKAKENNNNRKISNCDTSLFFSNLLLGTPVLKDISFKIERGQLLAVAGSTGAGKTSLLMMIMGELEPSEGKIKHSGRISFCSQYSWIMPGTIKDNIIFGVSYDEYRYRSVIKACQLEEDISKFSEKDNIVLGEGGITLSGGQRARISLARAVYKDADLYLLDSPFGYLDVLTEKEIFESCVCKLMANKTRILVTSKMEHLKKADKILILHEGSVYFYGTFSELQNQRPDFSSKLMGCDTFDQFTAERRNSIITETLRRFSLEGDTSVSWNETKKPSFKQTGEFGEKRKNSILNSINSIRKFSVVQKTSLQMNGIDGASDEPLERRLSLVPHSEPGEGILPRSNAVNSGPTFLGGRRQSVLNLMTCSSVNQGQSIHRKTATSTRKMSLAPQASLAEIDIYSRRLSQDTGLEISEEINEEDLRDCFFDDVENIPAVTTWNTYLRYITVHKSLMFVLIWCLVVFLVEVAASLVVLCLFPKILLQDKGNSTKNASNSYAVIITSTSSYYIFYIYVGVADTLLALGLFRGLPLVHTLITVSKTLHHKMLQSVLQAPMSTLNTLKTGGILNRFSKDIAVLDDLLPLTIFDFIQLLLIVIGAVVVVSVLQPYIFLATVPVIAAFILLRGYFLHTSQQLKQLESEGRSPIFTHLVTSLKGLWTLRAFGRQPYFETLFHKALNLHTANWFLYLSTLRWFQMRIEMIFVIFFIAVTFISILTTGEGEGRVGIILTLAMNIMGTLQWAVNSSIDVDSLMRSVSRVFKFIDMPTEDGKPNNSFRPSKDSQPSKVMIIENQHVKKDDIWPSGGQMTVKDLTAKYIDGGNAILENISFSISPGQRVGLLGRTGSGKSTLLLAFLRLLNTKGEIQIDGVSWDSITLQQWRKAFGVIPQKVFIFSGTFRKNLDPYEQWSDQEIWKVADEVGLRSVIEQFPGKLDFVLVDGGCVLSHGHKQLMCLARSVLSKAKILLLDEPSAHLDPITYQIIRRTLKQAFADCTVILSEHRIEAMLECQRFLVIEENKVRQYDSIQRMLSEKSLFRQAISPADRLKLLPHRNSSRQRSRANIAALKEETEEEVQETKL</sequence>
<evidence type="ECO:0000250" key="1">
    <source>
        <dbReference type="UniProtKB" id="P13569"/>
    </source>
</evidence>
<evidence type="ECO:0000250" key="2">
    <source>
        <dbReference type="UniProtKB" id="P26361"/>
    </source>
</evidence>
<evidence type="ECO:0000250" key="3">
    <source>
        <dbReference type="UniProtKB" id="P34158"/>
    </source>
</evidence>
<evidence type="ECO:0000255" key="4"/>
<evidence type="ECO:0000255" key="5">
    <source>
        <dbReference type="PROSITE-ProRule" id="PRU00434"/>
    </source>
</evidence>
<evidence type="ECO:0000255" key="6">
    <source>
        <dbReference type="PROSITE-ProRule" id="PRU00441"/>
    </source>
</evidence>
<evidence type="ECO:0000269" key="7">
    <source>
    </source>
</evidence>
<evidence type="ECO:0000305" key="8"/>
<evidence type="ECO:0007829" key="9">
    <source>
        <dbReference type="PDB" id="1CKW"/>
    </source>
</evidence>
<gene>
    <name evidence="1" type="primary">CFTR</name>
    <name type="synonym">ABCC7</name>
</gene>
<feature type="chain" id="PRO_0000093429" description="Cystic fibrosis transmembrane conductance regulator">
    <location>
        <begin position="1"/>
        <end position="1481"/>
    </location>
</feature>
<feature type="topological domain" description="Cytoplasmic" evidence="1">
    <location>
        <begin position="1"/>
        <end position="77"/>
    </location>
</feature>
<feature type="transmembrane region" description="Helical; Name=1" evidence="1">
    <location>
        <begin position="78"/>
        <end position="98"/>
    </location>
</feature>
<feature type="topological domain" description="Extracellular" evidence="1">
    <location>
        <begin position="99"/>
        <end position="122"/>
    </location>
</feature>
<feature type="transmembrane region" description="Helical; Name=2" evidence="1">
    <location>
        <begin position="123"/>
        <end position="146"/>
    </location>
</feature>
<feature type="topological domain" description="Cytoplasmic" evidence="1">
    <location>
        <begin position="147"/>
        <end position="195"/>
    </location>
</feature>
<feature type="transmembrane region" description="Helical; Name=3" evidence="1">
    <location>
        <begin position="196"/>
        <end position="216"/>
    </location>
</feature>
<feature type="topological domain" description="Extracellular" evidence="1">
    <location>
        <begin position="217"/>
        <end position="222"/>
    </location>
</feature>
<feature type="transmembrane region" description="Helical; Name=4" evidence="1">
    <location>
        <begin position="223"/>
        <end position="243"/>
    </location>
</feature>
<feature type="topological domain" description="Cytoplasmic" evidence="1">
    <location>
        <begin position="244"/>
        <end position="298"/>
    </location>
</feature>
<feature type="transmembrane region" description="Helical; Name=5" evidence="1">
    <location>
        <begin position="299"/>
        <end position="319"/>
    </location>
</feature>
<feature type="topological domain" description="Extracellular" evidence="1">
    <location>
        <begin position="320"/>
        <end position="339"/>
    </location>
</feature>
<feature type="transmembrane region" description="Helical; Name=6" evidence="1">
    <location>
        <begin position="340"/>
        <end position="358"/>
    </location>
</feature>
<feature type="topological domain" description="Cytoplasmic" evidence="1">
    <location>
        <begin position="359"/>
        <end position="858"/>
    </location>
</feature>
<feature type="transmembrane region" description="Helical; Name=7" evidence="1">
    <location>
        <begin position="859"/>
        <end position="879"/>
    </location>
</feature>
<feature type="topological domain" description="Extracellular" evidence="1">
    <location>
        <begin position="880"/>
        <end position="918"/>
    </location>
</feature>
<feature type="transmembrane region" description="Discontinuously helical; Name=8" evidence="1">
    <location>
        <begin position="919"/>
        <end position="939"/>
    </location>
</feature>
<feature type="topological domain" description="Cytoplasmic" evidence="1">
    <location>
        <begin position="940"/>
        <end position="990"/>
    </location>
</feature>
<feature type="transmembrane region" description="Helical; Name=9" evidence="1">
    <location>
        <begin position="991"/>
        <end position="1011"/>
    </location>
</feature>
<feature type="topological domain" description="Extracellular" evidence="1">
    <location>
        <begin position="1012"/>
        <end position="1013"/>
    </location>
</feature>
<feature type="transmembrane region" description="Helical; Name=10" evidence="1">
    <location>
        <begin position="1014"/>
        <end position="1034"/>
    </location>
</feature>
<feature type="topological domain" description="Cytoplasmic" evidence="1">
    <location>
        <begin position="1035"/>
        <end position="1095"/>
    </location>
</feature>
<feature type="transmembrane region" description="Helical; Name=11" evidence="1">
    <location>
        <begin position="1096"/>
        <end position="1116"/>
    </location>
</feature>
<feature type="topological domain" description="Extracellular" evidence="1">
    <location>
        <begin position="1117"/>
        <end position="1130"/>
    </location>
</feature>
<feature type="transmembrane region" description="Helical; Name=12" evidence="1">
    <location>
        <begin position="1131"/>
        <end position="1151"/>
    </location>
</feature>
<feature type="topological domain" description="Cytoplasmic" evidence="1">
    <location>
        <begin position="1152"/>
        <end position="1481"/>
    </location>
</feature>
<feature type="domain" description="ABC transmembrane type-1 1" evidence="6">
    <location>
        <begin position="81"/>
        <end position="365"/>
    </location>
</feature>
<feature type="domain" description="ABC transporter 1" evidence="5">
    <location>
        <begin position="421"/>
        <end position="645"/>
    </location>
</feature>
<feature type="domain" description="ABC transmembrane type-1 2" evidence="6">
    <location>
        <begin position="859"/>
        <end position="1155"/>
    </location>
</feature>
<feature type="domain" description="ABC transporter 2" evidence="5">
    <location>
        <begin position="1211"/>
        <end position="1444"/>
    </location>
</feature>
<feature type="region of interest" description="Disordered R region" evidence="1">
    <location>
        <begin position="653"/>
        <end position="831"/>
    </location>
</feature>
<feature type="region of interest" description="Interaction with GORASP2" evidence="1">
    <location>
        <begin position="1387"/>
        <end position="1481"/>
    </location>
</feature>
<feature type="short sequence motif" description="PDZ-binding" evidence="1">
    <location>
        <begin position="1479"/>
        <end position="1481"/>
    </location>
</feature>
<feature type="binding site" evidence="1">
    <location>
        <position position="401"/>
    </location>
    <ligand>
        <name>ATP</name>
        <dbReference type="ChEBI" id="CHEBI:30616"/>
        <label>1</label>
    </ligand>
</feature>
<feature type="binding site" evidence="5">
    <location>
        <begin position="457"/>
        <end position="464"/>
    </location>
    <ligand>
        <name>ATP</name>
        <dbReference type="ChEBI" id="CHEBI:30616"/>
        <label>1</label>
    </ligand>
</feature>
<feature type="binding site" evidence="2">
    <location>
        <position position="492"/>
    </location>
    <ligand>
        <name>ATP</name>
        <dbReference type="ChEBI" id="CHEBI:30616"/>
        <label>1</label>
    </ligand>
</feature>
<feature type="binding site" evidence="1">
    <location>
        <position position="1220"/>
    </location>
    <ligand>
        <name>ATP</name>
        <dbReference type="ChEBI" id="CHEBI:30616"/>
        <label>2</label>
    </ligand>
</feature>
<feature type="binding site" evidence="5">
    <location>
        <begin position="1245"/>
        <end position="1252"/>
    </location>
    <ligand>
        <name>ATP</name>
        <dbReference type="ChEBI" id="CHEBI:30616"/>
        <label>2</label>
    </ligand>
</feature>
<feature type="modified residue" description="Phosphoserine" evidence="1">
    <location>
        <position position="548"/>
    </location>
</feature>
<feature type="modified residue" description="Phosphoserine" evidence="1">
    <location>
        <position position="659"/>
    </location>
</feature>
<feature type="modified residue" description="Phosphoserine; by PKA" evidence="1">
    <location>
        <position position="669"/>
    </location>
</feature>
<feature type="modified residue" description="Phosphoserine" evidence="1">
    <location>
        <position position="685"/>
    </location>
</feature>
<feature type="modified residue" description="Phosphoserine" evidence="1">
    <location>
        <position position="699"/>
    </location>
</feature>
<feature type="modified residue" description="Phosphoserine" evidence="1">
    <location>
        <position position="711"/>
    </location>
</feature>
<feature type="modified residue" description="Phosphothreonine" evidence="1">
    <location>
        <position position="716"/>
    </location>
</feature>
<feature type="modified residue" description="Phosphoserine" evidence="1">
    <location>
        <position position="736"/>
    </location>
</feature>
<feature type="modified residue" description="Phosphoserine" evidence="1">
    <location>
        <position position="767"/>
    </location>
</feature>
<feature type="modified residue" description="Phosphoserine" evidence="1">
    <location>
        <position position="790"/>
    </location>
</feature>
<feature type="modified residue" description="Phosphoserine" evidence="1">
    <location>
        <position position="795"/>
    </location>
</feature>
<feature type="modified residue" description="Phosphoserine" evidence="1">
    <location>
        <position position="813"/>
    </location>
</feature>
<feature type="modified residue" description="Phosphoserine" evidence="1">
    <location>
        <position position="1457"/>
    </location>
</feature>
<feature type="lipid moiety-binding region" description="S-palmitoyl cysteine" evidence="1">
    <location>
        <position position="523"/>
    </location>
</feature>
<feature type="lipid moiety-binding region" description="S-palmitoyl cysteine" evidence="1">
    <location>
        <position position="1396"/>
    </location>
</feature>
<feature type="glycosylation site" description="N-linked (GlcNAc...) asparagine" evidence="4">
    <location>
        <position position="894"/>
    </location>
</feature>
<feature type="glycosylation site" description="N-linked (GlcNAc...) asparagine" evidence="4">
    <location>
        <position position="898"/>
    </location>
</feature>
<feature type="cross-link" description="Glycyl lysine isopeptide (Lys-Gly) (interchain with G-Cter in ubiquitin)" evidence="1">
    <location>
        <position position="687"/>
    </location>
</feature>
<feature type="sequence variant" evidence="7">
    <original>R</original>
    <variation>Q</variation>
    <location>
        <position position="297"/>
    </location>
</feature>
<feature type="sequence conflict" description="In Ref. 3; AAA31514." evidence="8" ref="3">
    <original>ILV</original>
    <variation>TTL</variation>
    <location>
        <begin position="600"/>
        <end position="602"/>
    </location>
</feature>
<feature type="sequence conflict" description="In Ref. 3; AAA31514." evidence="8" ref="3">
    <original>F</original>
    <variation>L</variation>
    <location>
        <position position="668"/>
    </location>
</feature>
<feature type="helix" evidence="9">
    <location>
        <begin position="502"/>
        <end position="506"/>
    </location>
</feature>
<feature type="helix" evidence="9">
    <location>
        <begin position="508"/>
        <end position="517"/>
    </location>
</feature>
<name>CFTR_SHEEP</name>
<protein>
    <recommendedName>
        <fullName evidence="1">Cystic fibrosis transmembrane conductance regulator</fullName>
        <shortName>CFTR</shortName>
    </recommendedName>
    <alternativeName>
        <fullName>ATP-binding cassette sub-family C member 7</fullName>
    </alternativeName>
    <alternativeName>
        <fullName>Channel conductance-controlling ATPase</fullName>
        <ecNumber evidence="1">5.6.1.6</ecNumber>
    </alternativeName>
    <alternativeName>
        <fullName>cAMP-dependent chloride channel</fullName>
    </alternativeName>
</protein>
<reference key="1">
    <citation type="journal article" date="1995" name="Proc. Natl. Acad. Sci. U.S.A.">
        <title>Molecular analysis of the ovine cystic fibrosis transmembrane conductance regulator gene.</title>
        <authorList>
            <person name="Tebbutt S.J."/>
            <person name="Wardle C.J."/>
            <person name="Hill D.F."/>
            <person name="Harris A."/>
        </authorList>
    </citation>
    <scope>NUCLEOTIDE SEQUENCE [MRNA]</scope>
</reference>
<reference key="2">
    <citation type="submission" date="2006-09" db="EMBL/GenBank/DDBJ databases">
        <title>NISC comparative sequencing initiative.</title>
        <authorList>
            <person name="Antonellis A."/>
            <person name="Ayele K."/>
            <person name="Benjamin B."/>
            <person name="Blakesley R.W."/>
            <person name="Boakye A."/>
            <person name="Bouffard G.G."/>
            <person name="Brinkley C."/>
            <person name="Brooks S."/>
            <person name="Chu G."/>
            <person name="Coleman H."/>
            <person name="Engle J."/>
            <person name="Gestole M."/>
            <person name="Greene A."/>
            <person name="Guan X."/>
            <person name="Gupta J."/>
            <person name="Haghighi P."/>
            <person name="Han J."/>
            <person name="Hansen N."/>
            <person name="Ho S.-L."/>
            <person name="Hu P."/>
            <person name="Hunter G."/>
            <person name="Hurle B."/>
            <person name="Idol J.R."/>
            <person name="Kwong P."/>
            <person name="Laric P."/>
            <person name="Larson S."/>
            <person name="Lee-Lin S.-Q."/>
            <person name="Legaspi R."/>
            <person name="Madden M."/>
            <person name="Maduro Q.L."/>
            <person name="Maduro V.B."/>
            <person name="Margulies E.H."/>
            <person name="Masiello C."/>
            <person name="Maskeri B."/>
            <person name="McDowell J."/>
            <person name="Mojidi H.A."/>
            <person name="Mullikin J.C."/>
            <person name="Oestreicher J.S."/>
            <person name="Park M."/>
            <person name="Portnoy M.E."/>
            <person name="Prasad A."/>
            <person name="Puri O."/>
            <person name="Reddix-Dugue N."/>
            <person name="Schandler K."/>
            <person name="Schueler M.G."/>
            <person name="Sison C."/>
            <person name="Stantripop S."/>
            <person name="Stephen E."/>
            <person name="Taye A."/>
            <person name="Thomas J.W."/>
            <person name="Thomas P.J."/>
            <person name="Tsipouri V."/>
            <person name="Ung L."/>
            <person name="Vogt J.L."/>
            <person name="Wetherby K.D."/>
            <person name="Young A."/>
            <person name="Green E.D."/>
        </authorList>
    </citation>
    <scope>NUCLEOTIDE SEQUENCE [LARGE SCALE GENOMIC DNA]</scope>
</reference>
<reference key="3">
    <citation type="journal article" date="1991" name="J. Biol. Chem.">
        <title>A cross-species analysis of the cystic fibrosis transmembrane conductance regulator. Potential functional domains and regulatory sites.</title>
        <authorList>
            <person name="Diamond G."/>
            <person name="Scanlin T.F."/>
            <person name="Zasloff M.A."/>
            <person name="Bevins C.L."/>
        </authorList>
    </citation>
    <scope>NUCLEOTIDE SEQUENCE [GENOMIC DNA] OF 600-776</scope>
</reference>
<reference key="4">
    <citation type="journal article" date="1998" name="Mutat. Res.">
        <title>Genetic variation within the ovine cystic fibrosis transmembrane conductance regulator gene.</title>
        <authorList>
            <person name="Tebbutt S.J."/>
            <person name="Lakeman M.B."/>
            <person name="Wilson-Wheeler J.C."/>
            <person name="Hill D.F."/>
        </authorList>
    </citation>
    <scope>VARIANT GLN-297</scope>
</reference>
<proteinExistence type="evidence at protein level"/>
<accession>Q00555</accession>
<accession>Q09YI2</accession>
<accession>Q28544</accession>
<organism>
    <name type="scientific">Ovis aries</name>
    <name type="common">Sheep</name>
    <dbReference type="NCBI Taxonomy" id="9940"/>
    <lineage>
        <taxon>Eukaryota</taxon>
        <taxon>Metazoa</taxon>
        <taxon>Chordata</taxon>
        <taxon>Craniata</taxon>
        <taxon>Vertebrata</taxon>
        <taxon>Euteleostomi</taxon>
        <taxon>Mammalia</taxon>
        <taxon>Eutheria</taxon>
        <taxon>Laurasiatheria</taxon>
        <taxon>Artiodactyla</taxon>
        <taxon>Ruminantia</taxon>
        <taxon>Pecora</taxon>
        <taxon>Bovidae</taxon>
        <taxon>Caprinae</taxon>
        <taxon>Ovis</taxon>
    </lineage>
</organism>
<comment type="function">
    <text evidence="1 2">Epithelial ion channel that plays an important role in the regulation of epithelial ion and water transport and fluid homeostasis. Mediates the transport of chloride ions across the cell membrane (By similarity). Possesses an intrinsic ATPase activity and utilizes ATP to gate its channel; the passive flow of anions through the channel is gated by cycles of ATP binding and hydrolysis by the ATP-binding domains (By similarity). The ion channel is also permeable to HCO(3)(-); selectivity depends on the extracellular chloride concentration. Exerts its function also by modulating the activity of other ion channels and transporters. Contributes to the regulation of the pH and the ion content of the epithelial fluid layer. Modulates the activity of the epithelial sodium channel (ENaC) complex, in part by regulating the cell surface expression of the ENaC complex. May regulate bicarbonate secretion and salvage in epithelial cells by regulating the transporter SLC4A7. Can inhibit the chloride channel activity of ANO1 (By similarity). Plays a role in the chloride and bicarbonate homeostasis during sperm epididymal maturation and capacitation (By similarity).</text>
</comment>
<comment type="catalytic activity">
    <reaction evidence="1">
        <text>ATP + H2O + closed Cl(-) channel = ADP + phosphate + open Cl(-) channel.</text>
        <dbReference type="EC" id="5.6.1.6"/>
    </reaction>
</comment>
<comment type="catalytic activity">
    <reaction evidence="1">
        <text>chloride(in) = chloride(out)</text>
        <dbReference type="Rhea" id="RHEA:29823"/>
        <dbReference type="ChEBI" id="CHEBI:17996"/>
    </reaction>
</comment>
<comment type="catalytic activity">
    <reaction evidence="1">
        <text>hydrogencarbonate(in) = hydrogencarbonate(out)</text>
        <dbReference type="Rhea" id="RHEA:28695"/>
        <dbReference type="ChEBI" id="CHEBI:17544"/>
    </reaction>
</comment>
<comment type="catalytic activity">
    <reaction evidence="1">
        <text>ATP + H2O = ADP + phosphate + H(+)</text>
        <dbReference type="Rhea" id="RHEA:13065"/>
        <dbReference type="ChEBI" id="CHEBI:15377"/>
        <dbReference type="ChEBI" id="CHEBI:15378"/>
        <dbReference type="ChEBI" id="CHEBI:30616"/>
        <dbReference type="ChEBI" id="CHEBI:43474"/>
        <dbReference type="ChEBI" id="CHEBI:456216"/>
    </reaction>
    <physiologicalReaction direction="left-to-right" evidence="1">
        <dbReference type="Rhea" id="RHEA:13066"/>
    </physiologicalReaction>
</comment>
<comment type="subunit">
    <text evidence="1 2 3">Monomer; does not require oligomerization for channel activity. May form oligomers in the membrane (By similarity). Interacts with SLC26A3, SLC26A6 and NHERF1 (By similarity). Interacts with SHANK2 (By similarity). Interacts with MYO6 (By similarity). Interacts (via C-terminus) with GOPC (via PDZ domain); this promotes CFTR internalization and thereby decreases channel activity. Interacts with SLC4A7 through NHERF1. Found in a complex with MYO5B and RAB11A. Interacts with ANO1. Interacts with SLC26A8 (By similarity). Interacts with AHCYL1; the interaction increases CFTR activity (By similarity). Interacts with CSE1L (By similarity). The core-glycosylated form interacts with GORASP2 (via PDZ GRASP-type 1 domain) in respone to ER stress (By similarity). Interacts with MARCHF2; the interaction leads to CFTR ubiqtuitination and degradation (By similarity). Interacts with ADGRG2 (By similarity).</text>
</comment>
<comment type="subcellular location">
    <subcellularLocation>
        <location evidence="2">Apical cell membrane</location>
        <topology evidence="1">Multi-pass membrane protein</topology>
    </subcellularLocation>
    <subcellularLocation>
        <location evidence="1">Early endosome membrane</location>
        <topology evidence="1">Multi-pass membrane protein</topology>
    </subcellularLocation>
    <subcellularLocation>
        <location evidence="2">Cell membrane</location>
        <topology evidence="1">Multi-pass membrane protein</topology>
    </subcellularLocation>
    <subcellularLocation>
        <location evidence="1">Recycling endosome membrane</location>
        <topology evidence="1">Multi-pass membrane protein</topology>
    </subcellularLocation>
    <subcellularLocation>
        <location evidence="1">Endoplasmic reticulum membrane</location>
        <topology evidence="1">Multi-pass membrane protein</topology>
    </subcellularLocation>
    <subcellularLocation>
        <location evidence="3">Nucleus</location>
    </subcellularLocation>
    <text evidence="1 3">The channel is internalized from the cell surface into an endosomal recycling compartment, from where it is recycled to the cell membrane. In the oviduct and bronchus, detected on the apical side of epithelial cells, but not associated with cilia. In Sertoli cells, a processed product is detected in the nucleus. ER stress induces GORASP2-mediated unconventional (ER/Golgi-independent) trafficking of core-glycosylated CFTR to cell membrane.</text>
</comment>
<comment type="domain">
    <text evidence="1 2">Binds and hydrolyzes ATP via the two cytoplasmic ABC transporter nucleotide-binding domains. The two ATP-binding domains interact with each other, forming a head-to-tail dimer. Normal ATPase activity requires interaction between the two domains. The first ABC transporter nucleotide-binding domain has no ATPase activity by itself.</text>
</comment>
<comment type="domain">
    <text evidence="1">The PDZ-binding motif mediates interactions with GOPC and with the SLC4A7, NHERF1/EBP50 complex.</text>
</comment>
<comment type="domain">
    <text evidence="1">The disordered R region mediates channel activation when it is phosphorylated, but not in the absence of phosphorylation.</text>
</comment>
<comment type="PTM">
    <text evidence="1">N-glycosylated.</text>
</comment>
<comment type="PTM">
    <text evidence="1">Phosphorylated; cAMP treatment promotes phosphorylation and activates the channel. Dephosphorylation decreases the ATPase activity (in vitro). Phosphorylation at PKA sites activates the channel. Phosphorylation at PKC sites enhances the response to phosphorylation by PKA. Phosphorylated by AMPK; this inhibits channel activity.</text>
</comment>
<comment type="PTM">
    <text evidence="1">Ubiquitinated, leading to its degradation in the lysosome. Deubiquitination by USP10 in early endosomes enhances its endocytic recycling to the cell membrane. Ubiquitinated by RNF185 during ER stress. Ubiquitinated by MARCHF2 (By similarity).</text>
</comment>
<comment type="similarity">
    <text evidence="8">Belongs to the ABC transporter superfamily. ABCC family. CFTR transporter (TC 3.A.1.202) subfamily.</text>
</comment>